<gene>
    <name type="primary">OPG075</name>
    <name type="ORF">O2L</name>
</gene>
<accession>P68690</accession>
<accession>P20818</accession>
<feature type="chain" id="PRO_0000141615" description="Glutaredoxin-1">
    <location>
        <begin position="1"/>
        <end position="108"/>
    </location>
</feature>
<feature type="domain" description="Glutaredoxin" evidence="3">
    <location>
        <begin position="3"/>
        <end position="106"/>
    </location>
</feature>
<feature type="disulfide bond" description="Redox-active" evidence="2">
    <location>
        <begin position="23"/>
        <end position="26"/>
    </location>
</feature>
<name>GLRX1_VACCC</name>
<proteinExistence type="inferred from homology"/>
<organism>
    <name type="scientific">Vaccinia virus (strain Copenhagen)</name>
    <name type="common">VACV</name>
    <dbReference type="NCBI Taxonomy" id="10249"/>
    <lineage>
        <taxon>Viruses</taxon>
        <taxon>Varidnaviria</taxon>
        <taxon>Bamfordvirae</taxon>
        <taxon>Nucleocytoviricota</taxon>
        <taxon>Pokkesviricetes</taxon>
        <taxon>Chitovirales</taxon>
        <taxon>Poxviridae</taxon>
        <taxon>Chordopoxvirinae</taxon>
        <taxon>Orthopoxvirus</taxon>
        <taxon>Vaccinia virus</taxon>
    </lineage>
</organism>
<sequence>MAEEFVQQRLANNKVTIFVKYTCPFCRNALDILNKFSFKRGAYEIVDIKEFKPENELRDYFEQITGGRTVPRIFFGKTSIGGYSDLLEIDNMDALGDILSSIGVLRTC</sequence>
<evidence type="ECO:0000250" key="1"/>
<evidence type="ECO:0000250" key="2">
    <source>
        <dbReference type="UniProtKB" id="P68692"/>
    </source>
</evidence>
<evidence type="ECO:0000255" key="3">
    <source>
        <dbReference type="PROSITE-ProRule" id="PRU00686"/>
    </source>
</evidence>
<evidence type="ECO:0000305" key="4"/>
<comment type="function">
    <text evidence="1">Displays thioltransferase and dehydroascorbate reductase activities.</text>
</comment>
<comment type="subcellular location">
    <subcellularLocation>
        <location>Virion</location>
    </subcellularLocation>
    <text evidence="1">Localizes to the virion core.</text>
</comment>
<comment type="induction">
    <text evidence="2">Expressed in the intermediate phase of the viral replicative cycle.</text>
</comment>
<comment type="similarity">
    <text evidence="4">Belongs to the glutaredoxin family.</text>
</comment>
<organismHost>
    <name type="scientific">Homo sapiens</name>
    <name type="common">Human</name>
    <dbReference type="NCBI Taxonomy" id="9606"/>
</organismHost>
<dbReference type="EMBL" id="M35027">
    <property type="protein sequence ID" value="AAA48055.1"/>
    <property type="molecule type" value="Genomic_DNA"/>
</dbReference>
<dbReference type="PIR" id="E42510">
    <property type="entry name" value="E42510"/>
</dbReference>
<dbReference type="BMRB" id="P68690"/>
<dbReference type="SMR" id="P68690"/>
<dbReference type="Proteomes" id="UP000008269">
    <property type="component" value="Segment"/>
</dbReference>
<dbReference type="GO" id="GO:0044423">
    <property type="term" value="C:virion component"/>
    <property type="evidence" value="ECO:0007669"/>
    <property type="project" value="UniProtKB-KW"/>
</dbReference>
<dbReference type="GO" id="GO:0015038">
    <property type="term" value="F:glutathione disulfide oxidoreductase activity"/>
    <property type="evidence" value="ECO:0007669"/>
    <property type="project" value="TreeGrafter"/>
</dbReference>
<dbReference type="Gene3D" id="3.40.30.10">
    <property type="entry name" value="Glutaredoxin"/>
    <property type="match status" value="1"/>
</dbReference>
<dbReference type="InterPro" id="IPR011767">
    <property type="entry name" value="GLR_AS"/>
</dbReference>
<dbReference type="InterPro" id="IPR047185">
    <property type="entry name" value="GLRX1"/>
</dbReference>
<dbReference type="InterPro" id="IPR002109">
    <property type="entry name" value="Glutaredoxin"/>
</dbReference>
<dbReference type="InterPro" id="IPR011899">
    <property type="entry name" value="Glutaredoxin_euk/vir"/>
</dbReference>
<dbReference type="InterPro" id="IPR014025">
    <property type="entry name" value="Glutaredoxin_subgr"/>
</dbReference>
<dbReference type="InterPro" id="IPR036249">
    <property type="entry name" value="Thioredoxin-like_sf"/>
</dbReference>
<dbReference type="NCBIfam" id="TIGR02180">
    <property type="entry name" value="GRX_euk"/>
    <property type="match status" value="1"/>
</dbReference>
<dbReference type="PANTHER" id="PTHR46185">
    <property type="entry name" value="GLUTAREDOXIN-1"/>
    <property type="match status" value="1"/>
</dbReference>
<dbReference type="PANTHER" id="PTHR46185:SF1">
    <property type="entry name" value="GLUTAREDOXIN-1"/>
    <property type="match status" value="1"/>
</dbReference>
<dbReference type="Pfam" id="PF00462">
    <property type="entry name" value="Glutaredoxin"/>
    <property type="match status" value="1"/>
</dbReference>
<dbReference type="PRINTS" id="PR00160">
    <property type="entry name" value="GLUTAREDOXIN"/>
</dbReference>
<dbReference type="SUPFAM" id="SSF52833">
    <property type="entry name" value="Thioredoxin-like"/>
    <property type="match status" value="1"/>
</dbReference>
<dbReference type="PROSITE" id="PS00195">
    <property type="entry name" value="GLUTAREDOXIN_1"/>
    <property type="match status" value="1"/>
</dbReference>
<dbReference type="PROSITE" id="PS51354">
    <property type="entry name" value="GLUTAREDOXIN_2"/>
    <property type="match status" value="1"/>
</dbReference>
<protein>
    <recommendedName>
        <fullName>Glutaredoxin-1</fullName>
    </recommendedName>
</protein>
<keyword id="KW-1015">Disulfide bond</keyword>
<keyword id="KW-0249">Electron transport</keyword>
<keyword id="KW-0676">Redox-active center</keyword>
<keyword id="KW-1185">Reference proteome</keyword>
<keyword id="KW-0813">Transport</keyword>
<keyword id="KW-0946">Virion</keyword>
<reference key="1">
    <citation type="journal article" date="1990" name="Virology">
        <title>The complete DNA sequence of vaccinia virus.</title>
        <authorList>
            <person name="Goebel S.J."/>
            <person name="Johnson G.P."/>
            <person name="Perkus M.E."/>
            <person name="Davis S.W."/>
            <person name="Winslow J.P."/>
            <person name="Paoletti E."/>
        </authorList>
    </citation>
    <scope>NUCLEOTIDE SEQUENCE [LARGE SCALE GENOMIC DNA]</scope>
</reference>
<reference key="2">
    <citation type="journal article" date="1990" name="Virology">
        <title>Appendix to 'The complete DNA sequence of vaccinia virus'.</title>
        <authorList>
            <person name="Goebel S.J."/>
            <person name="Johnson G.P."/>
            <person name="Perkus M.E."/>
            <person name="Davis S.W."/>
            <person name="Winslow J.P."/>
            <person name="Paoletti E."/>
        </authorList>
    </citation>
    <scope>NUCLEOTIDE SEQUENCE [LARGE SCALE GENOMIC DNA]</scope>
</reference>
<reference key="3">
    <citation type="journal article" date="1991" name="Virology">
        <title>Vaccinia virus encodes a protein with similarity to glutaredoxins.</title>
        <authorList>
            <person name="Johnson G.P."/>
            <person name="Goebel S.J."/>
            <person name="Perkus M.E."/>
            <person name="Davis S.W."/>
            <person name="Winslow J.P."/>
            <person name="Paoletti E."/>
        </authorList>
    </citation>
    <scope>IDENTIFICATION</scope>
</reference>